<dbReference type="EMBL" id="AE000512">
    <property type="protein sequence ID" value="AAD35785.1"/>
    <property type="molecule type" value="Genomic_DNA"/>
</dbReference>
<dbReference type="PIR" id="E72346">
    <property type="entry name" value="E72346"/>
</dbReference>
<dbReference type="RefSeq" id="NP_228512.1">
    <property type="nucleotide sequence ID" value="NC_000853.1"/>
</dbReference>
<dbReference type="RefSeq" id="WP_004081038.1">
    <property type="nucleotide sequence ID" value="NZ_CP011107.1"/>
</dbReference>
<dbReference type="SMR" id="Q9S5X1"/>
<dbReference type="FunCoup" id="Q9S5X1">
    <property type="interactions" value="134"/>
</dbReference>
<dbReference type="STRING" id="243274.TM_0703"/>
<dbReference type="PaxDb" id="243274-THEMA_01150"/>
<dbReference type="EnsemblBacteria" id="AAD35785">
    <property type="protein sequence ID" value="AAD35785"/>
    <property type="gene ID" value="TM_0703"/>
</dbReference>
<dbReference type="KEGG" id="tma:TM0703"/>
<dbReference type="KEGG" id="tmi:THEMA_01150"/>
<dbReference type="KEGG" id="tmm:Tmari_0703"/>
<dbReference type="KEGG" id="tmw:THMA_0718"/>
<dbReference type="eggNOG" id="COG1058">
    <property type="taxonomic scope" value="Bacteria"/>
</dbReference>
<dbReference type="eggNOG" id="COG1546">
    <property type="taxonomic scope" value="Bacteria"/>
</dbReference>
<dbReference type="InParanoid" id="Q9S5X1"/>
<dbReference type="OrthoDB" id="9801454at2"/>
<dbReference type="Proteomes" id="UP000008183">
    <property type="component" value="Chromosome"/>
</dbReference>
<dbReference type="CDD" id="cd00885">
    <property type="entry name" value="cinA"/>
    <property type="match status" value="1"/>
</dbReference>
<dbReference type="Gene3D" id="3.30.70.2860">
    <property type="match status" value="1"/>
</dbReference>
<dbReference type="Gene3D" id="3.90.950.20">
    <property type="entry name" value="CinA-like"/>
    <property type="match status" value="1"/>
</dbReference>
<dbReference type="Gene3D" id="3.40.980.10">
    <property type="entry name" value="MoaB/Mog-like domain"/>
    <property type="match status" value="1"/>
</dbReference>
<dbReference type="HAMAP" id="MF_00226_B">
    <property type="entry name" value="CinA_B"/>
    <property type="match status" value="1"/>
</dbReference>
<dbReference type="InterPro" id="IPR050101">
    <property type="entry name" value="CinA"/>
</dbReference>
<dbReference type="InterPro" id="IPR036653">
    <property type="entry name" value="CinA-like_C"/>
</dbReference>
<dbReference type="InterPro" id="IPR008136">
    <property type="entry name" value="CinA_C"/>
</dbReference>
<dbReference type="InterPro" id="IPR041424">
    <property type="entry name" value="CinA_KH"/>
</dbReference>
<dbReference type="InterPro" id="IPR008135">
    <property type="entry name" value="Competence-induced_CinA"/>
</dbReference>
<dbReference type="InterPro" id="IPR036425">
    <property type="entry name" value="MoaB/Mog-like_dom_sf"/>
</dbReference>
<dbReference type="InterPro" id="IPR001453">
    <property type="entry name" value="MoaB/Mog_dom"/>
</dbReference>
<dbReference type="NCBIfam" id="TIGR00200">
    <property type="entry name" value="cinA_nterm"/>
    <property type="match status" value="1"/>
</dbReference>
<dbReference type="NCBIfam" id="TIGR00177">
    <property type="entry name" value="molyb_syn"/>
    <property type="match status" value="1"/>
</dbReference>
<dbReference type="NCBIfam" id="TIGR00199">
    <property type="entry name" value="PncC_domain"/>
    <property type="match status" value="1"/>
</dbReference>
<dbReference type="NCBIfam" id="NF001813">
    <property type="entry name" value="PRK00549.1"/>
    <property type="match status" value="1"/>
</dbReference>
<dbReference type="PANTHER" id="PTHR13939">
    <property type="entry name" value="NICOTINAMIDE-NUCLEOTIDE AMIDOHYDROLASE PNCC"/>
    <property type="match status" value="1"/>
</dbReference>
<dbReference type="PANTHER" id="PTHR13939:SF0">
    <property type="entry name" value="NMN AMIDOHYDROLASE-LIKE PROTEIN YFAY"/>
    <property type="match status" value="1"/>
</dbReference>
<dbReference type="Pfam" id="PF02464">
    <property type="entry name" value="CinA"/>
    <property type="match status" value="1"/>
</dbReference>
<dbReference type="Pfam" id="PF18146">
    <property type="entry name" value="CinA_KH"/>
    <property type="match status" value="1"/>
</dbReference>
<dbReference type="Pfam" id="PF00994">
    <property type="entry name" value="MoCF_biosynth"/>
    <property type="match status" value="1"/>
</dbReference>
<dbReference type="PIRSF" id="PIRSF006728">
    <property type="entry name" value="CinA"/>
    <property type="match status" value="1"/>
</dbReference>
<dbReference type="SMART" id="SM00852">
    <property type="entry name" value="MoCF_biosynth"/>
    <property type="match status" value="1"/>
</dbReference>
<dbReference type="SUPFAM" id="SSF142433">
    <property type="entry name" value="CinA-like"/>
    <property type="match status" value="1"/>
</dbReference>
<dbReference type="SUPFAM" id="SSF53218">
    <property type="entry name" value="Molybdenum cofactor biosynthesis proteins"/>
    <property type="match status" value="1"/>
</dbReference>
<evidence type="ECO:0000255" key="1">
    <source>
        <dbReference type="HAMAP-Rule" id="MF_00226"/>
    </source>
</evidence>
<reference key="1">
    <citation type="journal article" date="1999" name="Nature">
        <title>Evidence for lateral gene transfer between Archaea and Bacteria from genome sequence of Thermotoga maritima.</title>
        <authorList>
            <person name="Nelson K.E."/>
            <person name="Clayton R.A."/>
            <person name="Gill S.R."/>
            <person name="Gwinn M.L."/>
            <person name="Dodson R.J."/>
            <person name="Haft D.H."/>
            <person name="Hickey E.K."/>
            <person name="Peterson J.D."/>
            <person name="Nelson W.C."/>
            <person name="Ketchum K.A."/>
            <person name="McDonald L.A."/>
            <person name="Utterback T.R."/>
            <person name="Malek J.A."/>
            <person name="Linher K.D."/>
            <person name="Garrett M.M."/>
            <person name="Stewart A.M."/>
            <person name="Cotton M.D."/>
            <person name="Pratt M.S."/>
            <person name="Phillips C.A."/>
            <person name="Richardson D.L."/>
            <person name="Heidelberg J.F."/>
            <person name="Sutton G.G."/>
            <person name="Fleischmann R.D."/>
            <person name="Eisen J.A."/>
            <person name="White O."/>
            <person name="Salzberg S.L."/>
            <person name="Smith H.O."/>
            <person name="Venter J.C."/>
            <person name="Fraser C.M."/>
        </authorList>
    </citation>
    <scope>NUCLEOTIDE SEQUENCE [LARGE SCALE GENOMIC DNA]</scope>
    <source>
        <strain>ATCC 43589 / DSM 3109 / JCM 10099 / NBRC 100826 / MSB8</strain>
    </source>
</reference>
<comment type="similarity">
    <text evidence="1">Belongs to the CinA family.</text>
</comment>
<feature type="chain" id="PRO_0000156786" description="CinA-like protein">
    <location>
        <begin position="1"/>
        <end position="408"/>
    </location>
</feature>
<keyword id="KW-1185">Reference proteome</keyword>
<gene>
    <name type="ordered locus">TM_0703</name>
</gene>
<protein>
    <recommendedName>
        <fullName evidence="1">CinA-like protein</fullName>
    </recommendedName>
</protein>
<name>CINAL_THEMA</name>
<proteinExistence type="inferred from homology"/>
<accession>Q9S5X1</accession>
<sequence length="408" mass="45181">MKKAAIITIGSELLEGLILNKNAQFLCQELKNLGYRVVKVSTVGDDLISISEEVKTLLLKVDLLILTGGLGPTQDDLTRDAVAKVLNRSLKLNEELLSKIKEKIKKYHSEIPQNIERQALVIDGAEVLDNPVGSAPGQLLTVDGKIVILLPGPPRELIPMFNALKDRLRTPDALYQVVLKYYSIPEAVLEDLLKDILYSQNIVEVATMADHVEGVRLRLTTHMKNKEYLDEMVKKILDKTGEHLYGVNDEKMEEVVVRLLKDRKKTLAVAESCTGGMLSSLVVNVPGASEVFIGGVVAYSNDLKKHILGVREDTLKKHGAVSEECVQEMTEGLKKLTGADICVSISGIAGPSGGTPEKPVGTVFIDIFEHEHITMRYNFTGDRNMIRTRSAMMALENLRKYLKGRERV</sequence>
<organism>
    <name type="scientific">Thermotoga maritima (strain ATCC 43589 / DSM 3109 / JCM 10099 / NBRC 100826 / MSB8)</name>
    <dbReference type="NCBI Taxonomy" id="243274"/>
    <lineage>
        <taxon>Bacteria</taxon>
        <taxon>Thermotogati</taxon>
        <taxon>Thermotogota</taxon>
        <taxon>Thermotogae</taxon>
        <taxon>Thermotogales</taxon>
        <taxon>Thermotogaceae</taxon>
        <taxon>Thermotoga</taxon>
    </lineage>
</organism>